<reference key="1">
    <citation type="journal article" date="2009" name="Proc. Natl. Acad. Sci. U.S.A.">
        <title>Biogeography of the Sulfolobus islandicus pan-genome.</title>
        <authorList>
            <person name="Reno M.L."/>
            <person name="Held N.L."/>
            <person name="Fields C.J."/>
            <person name="Burke P.V."/>
            <person name="Whitaker R.J."/>
        </authorList>
    </citation>
    <scope>NUCLEOTIDE SEQUENCE [LARGE SCALE GENOMIC DNA]</scope>
    <source>
        <strain>M.16.4 / Kamchatka #3</strain>
    </source>
</reference>
<keyword id="KW-0028">Amino-acid biosynthesis</keyword>
<keyword id="KW-0055">Arginine biosynthesis</keyword>
<keyword id="KW-0067">ATP-binding</keyword>
<keyword id="KW-0436">Ligase</keyword>
<keyword id="KW-0460">Magnesium</keyword>
<keyword id="KW-0464">Manganese</keyword>
<keyword id="KW-0479">Metal-binding</keyword>
<keyword id="KW-0547">Nucleotide-binding</keyword>
<keyword id="KW-0665">Pyrimidine biosynthesis</keyword>
<keyword id="KW-0677">Repeat</keyword>
<evidence type="ECO:0000255" key="1">
    <source>
        <dbReference type="HAMAP-Rule" id="MF_01210"/>
    </source>
</evidence>
<feature type="chain" id="PRO_1000213881" description="Carbamoyl phosphate synthase large chain">
    <location>
        <begin position="1"/>
        <end position="1051"/>
    </location>
</feature>
<feature type="domain" description="ATP-grasp 1" evidence="1">
    <location>
        <begin position="131"/>
        <end position="325"/>
    </location>
</feature>
<feature type="domain" description="ATP-grasp 2" evidence="1">
    <location>
        <begin position="673"/>
        <end position="863"/>
    </location>
</feature>
<feature type="domain" description="MGS-like" evidence="1">
    <location>
        <begin position="930"/>
        <end position="1051"/>
    </location>
</feature>
<feature type="region of interest" description="Carboxyphosphate synthetic domain" evidence="1">
    <location>
        <begin position="1"/>
        <end position="399"/>
    </location>
</feature>
<feature type="region of interest" description="Oligomerization domain" evidence="1">
    <location>
        <begin position="400"/>
        <end position="548"/>
    </location>
</feature>
<feature type="region of interest" description="Carbamoyl phosphate synthetic domain" evidence="1">
    <location>
        <begin position="549"/>
        <end position="930"/>
    </location>
</feature>
<feature type="region of interest" description="Allosteric domain" evidence="1">
    <location>
        <begin position="931"/>
        <end position="1051"/>
    </location>
</feature>
<feature type="binding site" evidence="1">
    <location>
        <position position="127"/>
    </location>
    <ligand>
        <name>ATP</name>
        <dbReference type="ChEBI" id="CHEBI:30616"/>
        <label>1</label>
    </ligand>
</feature>
<feature type="binding site" evidence="1">
    <location>
        <position position="167"/>
    </location>
    <ligand>
        <name>ATP</name>
        <dbReference type="ChEBI" id="CHEBI:30616"/>
        <label>1</label>
    </ligand>
</feature>
<feature type="binding site" evidence="1">
    <location>
        <position position="173"/>
    </location>
    <ligand>
        <name>ATP</name>
        <dbReference type="ChEBI" id="CHEBI:30616"/>
        <label>1</label>
    </ligand>
</feature>
<feature type="binding site" evidence="1">
    <location>
        <position position="174"/>
    </location>
    <ligand>
        <name>ATP</name>
        <dbReference type="ChEBI" id="CHEBI:30616"/>
        <label>1</label>
    </ligand>
</feature>
<feature type="binding site" evidence="1">
    <location>
        <position position="206"/>
    </location>
    <ligand>
        <name>ATP</name>
        <dbReference type="ChEBI" id="CHEBI:30616"/>
        <label>1</label>
    </ligand>
</feature>
<feature type="binding site" evidence="1">
    <location>
        <position position="208"/>
    </location>
    <ligand>
        <name>ATP</name>
        <dbReference type="ChEBI" id="CHEBI:30616"/>
        <label>1</label>
    </ligand>
</feature>
<feature type="binding site" evidence="1">
    <location>
        <position position="213"/>
    </location>
    <ligand>
        <name>ATP</name>
        <dbReference type="ChEBI" id="CHEBI:30616"/>
        <label>1</label>
    </ligand>
</feature>
<feature type="binding site" evidence="1">
    <location>
        <position position="239"/>
    </location>
    <ligand>
        <name>ATP</name>
        <dbReference type="ChEBI" id="CHEBI:30616"/>
        <label>1</label>
    </ligand>
</feature>
<feature type="binding site" evidence="1">
    <location>
        <position position="240"/>
    </location>
    <ligand>
        <name>ATP</name>
        <dbReference type="ChEBI" id="CHEBI:30616"/>
        <label>1</label>
    </ligand>
</feature>
<feature type="binding site" evidence="1">
    <location>
        <position position="241"/>
    </location>
    <ligand>
        <name>ATP</name>
        <dbReference type="ChEBI" id="CHEBI:30616"/>
        <label>1</label>
    </ligand>
</feature>
<feature type="binding site" evidence="1">
    <location>
        <position position="282"/>
    </location>
    <ligand>
        <name>ATP</name>
        <dbReference type="ChEBI" id="CHEBI:30616"/>
        <label>1</label>
    </ligand>
</feature>
<feature type="binding site" evidence="1">
    <location>
        <position position="282"/>
    </location>
    <ligand>
        <name>Mg(2+)</name>
        <dbReference type="ChEBI" id="CHEBI:18420"/>
        <label>1</label>
    </ligand>
</feature>
<feature type="binding site" evidence="1">
    <location>
        <position position="282"/>
    </location>
    <ligand>
        <name>Mn(2+)</name>
        <dbReference type="ChEBI" id="CHEBI:29035"/>
        <label>1</label>
    </ligand>
</feature>
<feature type="binding site" evidence="1">
    <location>
        <position position="296"/>
    </location>
    <ligand>
        <name>ATP</name>
        <dbReference type="ChEBI" id="CHEBI:30616"/>
        <label>1</label>
    </ligand>
</feature>
<feature type="binding site" evidence="1">
    <location>
        <position position="296"/>
    </location>
    <ligand>
        <name>Mg(2+)</name>
        <dbReference type="ChEBI" id="CHEBI:18420"/>
        <label>1</label>
    </ligand>
</feature>
<feature type="binding site" evidence="1">
    <location>
        <position position="296"/>
    </location>
    <ligand>
        <name>Mg(2+)</name>
        <dbReference type="ChEBI" id="CHEBI:18420"/>
        <label>2</label>
    </ligand>
</feature>
<feature type="binding site" evidence="1">
    <location>
        <position position="296"/>
    </location>
    <ligand>
        <name>Mn(2+)</name>
        <dbReference type="ChEBI" id="CHEBI:29035"/>
        <label>1</label>
    </ligand>
</feature>
<feature type="binding site" evidence="1">
    <location>
        <position position="296"/>
    </location>
    <ligand>
        <name>Mn(2+)</name>
        <dbReference type="ChEBI" id="CHEBI:29035"/>
        <label>2</label>
    </ligand>
</feature>
<feature type="binding site" evidence="1">
    <location>
        <position position="298"/>
    </location>
    <ligand>
        <name>Mg(2+)</name>
        <dbReference type="ChEBI" id="CHEBI:18420"/>
        <label>2</label>
    </ligand>
</feature>
<feature type="binding site" evidence="1">
    <location>
        <position position="298"/>
    </location>
    <ligand>
        <name>Mn(2+)</name>
        <dbReference type="ChEBI" id="CHEBI:29035"/>
        <label>2</label>
    </ligand>
</feature>
<feature type="binding site" evidence="1">
    <location>
        <position position="709"/>
    </location>
    <ligand>
        <name>ATP</name>
        <dbReference type="ChEBI" id="CHEBI:30616"/>
        <label>2</label>
    </ligand>
</feature>
<feature type="binding site" evidence="1">
    <location>
        <position position="748"/>
    </location>
    <ligand>
        <name>ATP</name>
        <dbReference type="ChEBI" id="CHEBI:30616"/>
        <label>2</label>
    </ligand>
</feature>
<feature type="binding site" evidence="1">
    <location>
        <position position="750"/>
    </location>
    <ligand>
        <name>ATP</name>
        <dbReference type="ChEBI" id="CHEBI:30616"/>
        <label>2</label>
    </ligand>
</feature>
<feature type="binding site" evidence="1">
    <location>
        <position position="755"/>
    </location>
    <ligand>
        <name>ATP</name>
        <dbReference type="ChEBI" id="CHEBI:30616"/>
        <label>2</label>
    </ligand>
</feature>
<feature type="binding site" evidence="1">
    <location>
        <position position="779"/>
    </location>
    <ligand>
        <name>ATP</name>
        <dbReference type="ChEBI" id="CHEBI:30616"/>
        <label>2</label>
    </ligand>
</feature>
<feature type="binding site" evidence="1">
    <location>
        <position position="780"/>
    </location>
    <ligand>
        <name>ATP</name>
        <dbReference type="ChEBI" id="CHEBI:30616"/>
        <label>2</label>
    </ligand>
</feature>
<feature type="binding site" evidence="1">
    <location>
        <position position="781"/>
    </location>
    <ligand>
        <name>ATP</name>
        <dbReference type="ChEBI" id="CHEBI:30616"/>
        <label>2</label>
    </ligand>
</feature>
<feature type="binding site" evidence="1">
    <location>
        <position position="782"/>
    </location>
    <ligand>
        <name>ATP</name>
        <dbReference type="ChEBI" id="CHEBI:30616"/>
        <label>2</label>
    </ligand>
</feature>
<feature type="binding site" evidence="1">
    <location>
        <position position="822"/>
    </location>
    <ligand>
        <name>ATP</name>
        <dbReference type="ChEBI" id="CHEBI:30616"/>
        <label>2</label>
    </ligand>
</feature>
<feature type="binding site" evidence="1">
    <location>
        <position position="822"/>
    </location>
    <ligand>
        <name>Mg(2+)</name>
        <dbReference type="ChEBI" id="CHEBI:18420"/>
        <label>3</label>
    </ligand>
</feature>
<feature type="binding site" evidence="1">
    <location>
        <position position="822"/>
    </location>
    <ligand>
        <name>Mn(2+)</name>
        <dbReference type="ChEBI" id="CHEBI:29035"/>
        <label>3</label>
    </ligand>
</feature>
<feature type="binding site" evidence="1">
    <location>
        <position position="834"/>
    </location>
    <ligand>
        <name>ATP</name>
        <dbReference type="ChEBI" id="CHEBI:30616"/>
        <label>2</label>
    </ligand>
</feature>
<feature type="binding site" evidence="1">
    <location>
        <position position="834"/>
    </location>
    <ligand>
        <name>Mg(2+)</name>
        <dbReference type="ChEBI" id="CHEBI:18420"/>
        <label>3</label>
    </ligand>
</feature>
<feature type="binding site" evidence="1">
    <location>
        <position position="834"/>
    </location>
    <ligand>
        <name>Mg(2+)</name>
        <dbReference type="ChEBI" id="CHEBI:18420"/>
        <label>4</label>
    </ligand>
</feature>
<feature type="binding site" evidence="1">
    <location>
        <position position="834"/>
    </location>
    <ligand>
        <name>Mn(2+)</name>
        <dbReference type="ChEBI" id="CHEBI:29035"/>
        <label>3</label>
    </ligand>
</feature>
<feature type="binding site" evidence="1">
    <location>
        <position position="834"/>
    </location>
    <ligand>
        <name>Mn(2+)</name>
        <dbReference type="ChEBI" id="CHEBI:29035"/>
        <label>4</label>
    </ligand>
</feature>
<feature type="binding site" evidence="1">
    <location>
        <position position="836"/>
    </location>
    <ligand>
        <name>Mg(2+)</name>
        <dbReference type="ChEBI" id="CHEBI:18420"/>
        <label>4</label>
    </ligand>
</feature>
<feature type="binding site" evidence="1">
    <location>
        <position position="836"/>
    </location>
    <ligand>
        <name>Mn(2+)</name>
        <dbReference type="ChEBI" id="CHEBI:29035"/>
        <label>4</label>
    </ligand>
</feature>
<sequence>MKETPKKVLVIGSGPIKIAEAAEFDYSGSQALKALKEEGIETVLVNSNVATVQTSKKFADKLYMLPVVWWAVEKVIEKERPDGIMIGFGGQTALNVGVDLHKKGVLQKYGVKVLGTQIDGIEKALSREKFRETMIENNLPVPPSLSARSEEEAIKNAKIVGYPVMVRVSFNLGGRGSMVAWTEEDLKKNIRRALSQSYIGEVLIEKYLYHWIELEYEVMRDKKGNSAVIACIENLDPMGVHTGESTVVAPCQTLDNLEYQNMRTYTIEVARSINLIGECNVQFALNPRGYEYYIIETNPRMSRSSALASKATGYPLAYVSAKLALGYELHEVINKVSGRTCACFEPSLDYIVTKIPRWDLSKFENVDQSLATEMMSVGEVMSIGRSFEESLQKAVRMLDIGEPGVVGGKIYEAKMSKVEALKYLKERRPYWFLYVAKAFKEGATIDEVYEVTGISKFFLNKIKGLVDFYETLKILKEIDEETLKLAKKLGFSDEQISKALNKSTEYVRKIRDQSNIIPVVKLIDTLAGEWPSVTNYMYLTYNGTEDDLEFSQGNKLLMVGAGGFRIGVSVEFDWSVVSLMEAASKYFDEVAVLNYNPETVSTDWDIARKLYFDEINVERVLDLIKKEKFRYVATFSGGQIGNSIAKELEENGVRLLGTSGSSVDIAENREKFSKLLDKLGISQPNWVSATSLEEIKKFVNEVGFPVLVRPSYVLSGSSMKIAYSEEELYEYVRRATEISPKYPVVISKYIENAIEAEVDGVSDGNRVLGITLEHVEEAGVHSGDATMSIPFRKLSENSVNKMRENVLSLARELNIKGPFNVQFVVKDNTPHIIELNLRASRSMPFSSKAKGINLINESMKAIFNGLDFSEDYYEPPSKYWAVKSPQFSWSQLRGTYPFLGPEMKSTGEAASFGVTFYDALLKSWLSSIPNRIPNKNGIALVYGDKNLDYLKDTAVNLVKFGLTVYSISELPLQGIETIDKTKAEELVRAKKVEIVVTDGYLKKFDYNIRRTAVDYNIPVILNGRLGYEVSKAFLDYDSLTFFEISEYGGGI</sequence>
<organism>
    <name type="scientific">Saccharolobus islandicus (strain M.16.4 / Kamchatka #3)</name>
    <name type="common">Sulfolobus islandicus</name>
    <dbReference type="NCBI Taxonomy" id="426118"/>
    <lineage>
        <taxon>Archaea</taxon>
        <taxon>Thermoproteota</taxon>
        <taxon>Thermoprotei</taxon>
        <taxon>Sulfolobales</taxon>
        <taxon>Sulfolobaceae</taxon>
        <taxon>Saccharolobus</taxon>
    </lineage>
</organism>
<protein>
    <recommendedName>
        <fullName evidence="1">Carbamoyl phosphate synthase large chain</fullName>
        <ecNumber evidence="1">6.3.4.16</ecNumber>
        <ecNumber evidence="1">6.3.5.5</ecNumber>
    </recommendedName>
    <alternativeName>
        <fullName evidence="1">Carbamoyl phosphate synthetase ammonia chain</fullName>
    </alternativeName>
</protein>
<dbReference type="EC" id="6.3.4.16" evidence="1"/>
<dbReference type="EC" id="6.3.5.5" evidence="1"/>
<dbReference type="EMBL" id="CP001402">
    <property type="protein sequence ID" value="ACR42091.1"/>
    <property type="molecule type" value="Genomic_DNA"/>
</dbReference>
<dbReference type="RefSeq" id="WP_012735959.1">
    <property type="nucleotide sequence ID" value="NC_012726.1"/>
</dbReference>
<dbReference type="SMR" id="C4KHM7"/>
<dbReference type="GeneID" id="84061809"/>
<dbReference type="KEGG" id="sid:M164_1490"/>
<dbReference type="HOGENOM" id="CLU_000513_1_3_2"/>
<dbReference type="UniPathway" id="UPA00068">
    <property type="reaction ID" value="UER00171"/>
</dbReference>
<dbReference type="UniPathway" id="UPA00070">
    <property type="reaction ID" value="UER00115"/>
</dbReference>
<dbReference type="Proteomes" id="UP000001479">
    <property type="component" value="Chromosome"/>
</dbReference>
<dbReference type="GO" id="GO:0005737">
    <property type="term" value="C:cytoplasm"/>
    <property type="evidence" value="ECO:0007669"/>
    <property type="project" value="TreeGrafter"/>
</dbReference>
<dbReference type="GO" id="GO:0005524">
    <property type="term" value="F:ATP binding"/>
    <property type="evidence" value="ECO:0007669"/>
    <property type="project" value="UniProtKB-UniRule"/>
</dbReference>
<dbReference type="GO" id="GO:0004087">
    <property type="term" value="F:carbamoyl-phosphate synthase (ammonia) activity"/>
    <property type="evidence" value="ECO:0007669"/>
    <property type="project" value="RHEA"/>
</dbReference>
<dbReference type="GO" id="GO:0004088">
    <property type="term" value="F:carbamoyl-phosphate synthase (glutamine-hydrolyzing) activity"/>
    <property type="evidence" value="ECO:0007669"/>
    <property type="project" value="UniProtKB-UniRule"/>
</dbReference>
<dbReference type="GO" id="GO:0046872">
    <property type="term" value="F:metal ion binding"/>
    <property type="evidence" value="ECO:0007669"/>
    <property type="project" value="UniProtKB-KW"/>
</dbReference>
<dbReference type="GO" id="GO:0044205">
    <property type="term" value="P:'de novo' UMP biosynthetic process"/>
    <property type="evidence" value="ECO:0007669"/>
    <property type="project" value="UniProtKB-UniRule"/>
</dbReference>
<dbReference type="GO" id="GO:0006541">
    <property type="term" value="P:glutamine metabolic process"/>
    <property type="evidence" value="ECO:0007669"/>
    <property type="project" value="TreeGrafter"/>
</dbReference>
<dbReference type="GO" id="GO:0006526">
    <property type="term" value="P:L-arginine biosynthetic process"/>
    <property type="evidence" value="ECO:0007669"/>
    <property type="project" value="UniProtKB-UniRule"/>
</dbReference>
<dbReference type="FunFam" id="1.10.1030.10:FF:000002">
    <property type="entry name" value="Carbamoyl-phosphate synthase large chain"/>
    <property type="match status" value="1"/>
</dbReference>
<dbReference type="FunFam" id="3.30.1490.20:FF:000001">
    <property type="entry name" value="Carbamoyl-phosphate synthase large chain"/>
    <property type="match status" value="1"/>
</dbReference>
<dbReference type="FunFam" id="3.30.470.20:FF:000001">
    <property type="entry name" value="Carbamoyl-phosphate synthase large chain"/>
    <property type="match status" value="1"/>
</dbReference>
<dbReference type="FunFam" id="3.30.470.20:FF:000026">
    <property type="entry name" value="Carbamoyl-phosphate synthase large chain"/>
    <property type="match status" value="1"/>
</dbReference>
<dbReference type="FunFam" id="3.40.50.20:FF:000001">
    <property type="entry name" value="Carbamoyl-phosphate synthase large chain"/>
    <property type="match status" value="2"/>
</dbReference>
<dbReference type="Gene3D" id="3.40.50.20">
    <property type="match status" value="2"/>
</dbReference>
<dbReference type="Gene3D" id="3.30.1490.20">
    <property type="entry name" value="ATP-grasp fold, A domain"/>
    <property type="match status" value="1"/>
</dbReference>
<dbReference type="Gene3D" id="3.30.470.20">
    <property type="entry name" value="ATP-grasp fold, B domain"/>
    <property type="match status" value="2"/>
</dbReference>
<dbReference type="Gene3D" id="1.10.1030.10">
    <property type="entry name" value="Carbamoyl-phosphate synthetase, large subunit oligomerisation domain"/>
    <property type="match status" value="1"/>
</dbReference>
<dbReference type="HAMAP" id="MF_01210_A">
    <property type="entry name" value="CPSase_L_chain_A"/>
    <property type="match status" value="1"/>
</dbReference>
<dbReference type="InterPro" id="IPR011761">
    <property type="entry name" value="ATP-grasp"/>
</dbReference>
<dbReference type="InterPro" id="IPR013815">
    <property type="entry name" value="ATP_grasp_subdomain_1"/>
</dbReference>
<dbReference type="InterPro" id="IPR006275">
    <property type="entry name" value="CarbamoylP_synth_lsu"/>
</dbReference>
<dbReference type="InterPro" id="IPR005480">
    <property type="entry name" value="CarbamoylP_synth_lsu_oligo"/>
</dbReference>
<dbReference type="InterPro" id="IPR036897">
    <property type="entry name" value="CarbamoylP_synth_lsu_oligo_sf"/>
</dbReference>
<dbReference type="InterPro" id="IPR005479">
    <property type="entry name" value="CbamoylP_synth_lsu-like_ATP-bd"/>
</dbReference>
<dbReference type="InterPro" id="IPR005483">
    <property type="entry name" value="CbamoylP_synth_lsu_CPSase_dom"/>
</dbReference>
<dbReference type="InterPro" id="IPR011607">
    <property type="entry name" value="MGS-like_dom"/>
</dbReference>
<dbReference type="InterPro" id="IPR016185">
    <property type="entry name" value="PreATP-grasp_dom_sf"/>
</dbReference>
<dbReference type="NCBIfam" id="TIGR01369">
    <property type="entry name" value="CPSaseII_lrg"/>
    <property type="match status" value="1"/>
</dbReference>
<dbReference type="NCBIfam" id="NF003671">
    <property type="entry name" value="PRK05294.1"/>
    <property type="match status" value="1"/>
</dbReference>
<dbReference type="NCBIfam" id="NF009455">
    <property type="entry name" value="PRK12815.1"/>
    <property type="match status" value="1"/>
</dbReference>
<dbReference type="PANTHER" id="PTHR11405:SF53">
    <property type="entry name" value="CARBAMOYL-PHOSPHATE SYNTHASE [AMMONIA], MITOCHONDRIAL"/>
    <property type="match status" value="1"/>
</dbReference>
<dbReference type="PANTHER" id="PTHR11405">
    <property type="entry name" value="CARBAMOYLTRANSFERASE FAMILY MEMBER"/>
    <property type="match status" value="1"/>
</dbReference>
<dbReference type="Pfam" id="PF02786">
    <property type="entry name" value="CPSase_L_D2"/>
    <property type="match status" value="2"/>
</dbReference>
<dbReference type="Pfam" id="PF02787">
    <property type="entry name" value="CPSase_L_D3"/>
    <property type="match status" value="1"/>
</dbReference>
<dbReference type="PRINTS" id="PR00098">
    <property type="entry name" value="CPSASE"/>
</dbReference>
<dbReference type="SMART" id="SM01096">
    <property type="entry name" value="CPSase_L_D3"/>
    <property type="match status" value="1"/>
</dbReference>
<dbReference type="SUPFAM" id="SSF48108">
    <property type="entry name" value="Carbamoyl phosphate synthetase, large subunit connection domain"/>
    <property type="match status" value="1"/>
</dbReference>
<dbReference type="SUPFAM" id="SSF56059">
    <property type="entry name" value="Glutathione synthetase ATP-binding domain-like"/>
    <property type="match status" value="2"/>
</dbReference>
<dbReference type="SUPFAM" id="SSF52440">
    <property type="entry name" value="PreATP-grasp domain"/>
    <property type="match status" value="2"/>
</dbReference>
<dbReference type="PROSITE" id="PS50975">
    <property type="entry name" value="ATP_GRASP"/>
    <property type="match status" value="2"/>
</dbReference>
<dbReference type="PROSITE" id="PS00867">
    <property type="entry name" value="CPSASE_2"/>
    <property type="match status" value="1"/>
</dbReference>
<dbReference type="PROSITE" id="PS51855">
    <property type="entry name" value="MGS"/>
    <property type="match status" value="1"/>
</dbReference>
<accession>C4KHM7</accession>
<comment type="function">
    <text evidence="1">Large subunit of the glutamine-dependent carbamoyl phosphate synthetase (CPSase). CPSase catalyzes the formation of carbamoyl phosphate from the ammonia moiety of glutamine, carbonate, and phosphate donated by ATP, constituting the first step of 2 biosynthetic pathways, one leading to arginine and/or urea and the other to pyrimidine nucleotides. The large subunit (synthetase) binds the substrates ammonia (free or transferred from glutamine from the small subunit), hydrogencarbonate and ATP and carries out an ATP-coupled ligase reaction, activating hydrogencarbonate by forming carboxy phosphate which reacts with ammonia to form carbamoyl phosphate.</text>
</comment>
<comment type="catalytic activity">
    <reaction evidence="1">
        <text>hydrogencarbonate + L-glutamine + 2 ATP + H2O = carbamoyl phosphate + L-glutamate + 2 ADP + phosphate + 2 H(+)</text>
        <dbReference type="Rhea" id="RHEA:18633"/>
        <dbReference type="ChEBI" id="CHEBI:15377"/>
        <dbReference type="ChEBI" id="CHEBI:15378"/>
        <dbReference type="ChEBI" id="CHEBI:17544"/>
        <dbReference type="ChEBI" id="CHEBI:29985"/>
        <dbReference type="ChEBI" id="CHEBI:30616"/>
        <dbReference type="ChEBI" id="CHEBI:43474"/>
        <dbReference type="ChEBI" id="CHEBI:58228"/>
        <dbReference type="ChEBI" id="CHEBI:58359"/>
        <dbReference type="ChEBI" id="CHEBI:456216"/>
        <dbReference type="EC" id="6.3.5.5"/>
    </reaction>
</comment>
<comment type="catalytic activity">
    <molecule>Carbamoyl phosphate synthase large chain</molecule>
    <reaction evidence="1">
        <text>hydrogencarbonate + NH4(+) + 2 ATP = carbamoyl phosphate + 2 ADP + phosphate + 2 H(+)</text>
        <dbReference type="Rhea" id="RHEA:18029"/>
        <dbReference type="ChEBI" id="CHEBI:15378"/>
        <dbReference type="ChEBI" id="CHEBI:17544"/>
        <dbReference type="ChEBI" id="CHEBI:28938"/>
        <dbReference type="ChEBI" id="CHEBI:30616"/>
        <dbReference type="ChEBI" id="CHEBI:43474"/>
        <dbReference type="ChEBI" id="CHEBI:58228"/>
        <dbReference type="ChEBI" id="CHEBI:456216"/>
        <dbReference type="EC" id="6.3.4.16"/>
    </reaction>
</comment>
<comment type="cofactor">
    <cofactor evidence="1">
        <name>Mg(2+)</name>
        <dbReference type="ChEBI" id="CHEBI:18420"/>
    </cofactor>
    <cofactor evidence="1">
        <name>Mn(2+)</name>
        <dbReference type="ChEBI" id="CHEBI:29035"/>
    </cofactor>
    <text evidence="1">Binds 4 Mg(2+) or Mn(2+) ions per subunit.</text>
</comment>
<comment type="pathway">
    <text evidence="1">Amino-acid biosynthesis; L-arginine biosynthesis; carbamoyl phosphate from bicarbonate: step 1/1.</text>
</comment>
<comment type="pathway">
    <text evidence="1">Pyrimidine metabolism; UMP biosynthesis via de novo pathway; (S)-dihydroorotate from bicarbonate: step 1/3.</text>
</comment>
<comment type="subunit">
    <text evidence="1">Composed of two chains; the small (or glutamine) chain promotes the hydrolysis of glutamine to ammonia, which is used by the large (or ammonia) chain to synthesize carbamoyl phosphate. Tetramer of heterodimers (alpha,beta)4.</text>
</comment>
<comment type="domain">
    <text evidence="1">The large subunit is composed of 2 ATP-grasp domains that are involved in binding the 2 ATP molecules needed for carbamoyl phosphate synthesis. The N-terminal ATP-grasp domain (referred to as the carboxyphosphate synthetic component) catalyzes the ATP-dependent phosphorylation of hydrogencarbonate to carboxyphosphate and the subsequent nucleophilic attack by ammonia to form a carbamate intermediate. The C-terminal ATP-grasp domain (referred to as the carbamoyl phosphate synthetic component) then catalyzes the phosphorylation of carbamate with the second ATP to form the end product carbamoyl phosphate. The reactive and unstable enzyme intermediates are sequentially channeled from one active site to the next through the interior of the protein over a distance of at least 96 A.</text>
</comment>
<comment type="similarity">
    <text evidence="1">Belongs to the CarB family.</text>
</comment>
<name>CARB_SACI6</name>
<gene>
    <name evidence="1" type="primary">carB</name>
    <name type="ordered locus">M164_1490</name>
</gene>
<proteinExistence type="inferred from homology"/>